<comment type="function">
    <text evidence="1">Inhibits Y-organs where molting hormone (ecdysteroid) is secreted. A molting cycle is initiated when MIH secretion diminishes or stops (By similarity).</text>
</comment>
<comment type="subcellular location">
    <subcellularLocation>
        <location>Secreted</location>
    </subcellularLocation>
</comment>
<comment type="similarity">
    <text evidence="3">Belongs to the arthropod CHH/MIH/GIH/VIH hormone family.</text>
</comment>
<dbReference type="SMR" id="P55848"/>
<dbReference type="EnsemblMetazoa" id="XM_045733468.1">
    <property type="protein sequence ID" value="XP_045589424.1"/>
    <property type="gene ID" value="LOC123751370"/>
</dbReference>
<dbReference type="OrthoDB" id="6330469at2759"/>
<dbReference type="GO" id="GO:0005576">
    <property type="term" value="C:extracellular region"/>
    <property type="evidence" value="ECO:0007669"/>
    <property type="project" value="UniProtKB-SubCell"/>
</dbReference>
<dbReference type="GO" id="GO:0005184">
    <property type="term" value="F:neuropeptide hormone activity"/>
    <property type="evidence" value="ECO:0007669"/>
    <property type="project" value="InterPro"/>
</dbReference>
<dbReference type="GO" id="GO:0007623">
    <property type="term" value="P:circadian rhythm"/>
    <property type="evidence" value="ECO:0007669"/>
    <property type="project" value="TreeGrafter"/>
</dbReference>
<dbReference type="GO" id="GO:0007218">
    <property type="term" value="P:neuropeptide signaling pathway"/>
    <property type="evidence" value="ECO:0007669"/>
    <property type="project" value="UniProtKB-KW"/>
</dbReference>
<dbReference type="Gene3D" id="1.10.2010.10">
    <property type="entry name" value="Crustacean CHH/MIH/GIH neurohormone"/>
    <property type="match status" value="1"/>
</dbReference>
<dbReference type="InterPro" id="IPR018251">
    <property type="entry name" value="Crust_neurhormone_CS"/>
</dbReference>
<dbReference type="InterPro" id="IPR031098">
    <property type="entry name" value="Crust_neurohorm"/>
</dbReference>
<dbReference type="InterPro" id="IPR035957">
    <property type="entry name" value="Crust_neurohorm_sf"/>
</dbReference>
<dbReference type="InterPro" id="IPR001166">
    <property type="entry name" value="Hyperglycemic"/>
</dbReference>
<dbReference type="InterPro" id="IPR001262">
    <property type="entry name" value="Hyperglycemic2"/>
</dbReference>
<dbReference type="PANTHER" id="PTHR35981">
    <property type="entry name" value="ION TRANSPORT PEPTIDE, ISOFORM C"/>
    <property type="match status" value="1"/>
</dbReference>
<dbReference type="PANTHER" id="PTHR35981:SF2">
    <property type="entry name" value="ION TRANSPORT PEPTIDE, ISOFORM C"/>
    <property type="match status" value="1"/>
</dbReference>
<dbReference type="Pfam" id="PF01147">
    <property type="entry name" value="Crust_neurohorm"/>
    <property type="match status" value="1"/>
</dbReference>
<dbReference type="PRINTS" id="PR00549">
    <property type="entry name" value="HYPRGLYCEMC2"/>
</dbReference>
<dbReference type="PRINTS" id="PR00550">
    <property type="entry name" value="HYPRGLYCEMIC"/>
</dbReference>
<dbReference type="SUPFAM" id="SSF81778">
    <property type="entry name" value="Crustacean CHH/MIH/GIH neurohormone"/>
    <property type="match status" value="1"/>
</dbReference>
<dbReference type="PROSITE" id="PS01250">
    <property type="entry name" value="CHH_MIH_GIH"/>
    <property type="match status" value="1"/>
</dbReference>
<reference key="1">
    <citation type="journal article" date="1996" name="Biosci. Biotechnol. Biochem.">
        <title>Isolation and amino acid sequence of a molt-inhibiting hormone from the American crayfish, Procambarus clarkii.</title>
        <authorList>
            <person name="Nagasawa H."/>
            <person name="Yang W.J."/>
            <person name="Shimizu H."/>
            <person name="Aida K."/>
            <person name="Tsutsumi H."/>
            <person name="Terauchi A."/>
            <person name="Sonobe H."/>
        </authorList>
    </citation>
    <scope>PROTEIN SEQUENCE</scope>
    <scope>AMIDATION AT ALA-75</scope>
</reference>
<name>MIH_PROCL</name>
<sequence length="75" mass="8658">RYVFEECPGVMGNRAVHGKVTRVCEDCYNVFRDTDVLAGCRKGCFSSEMFKLCLLAMERVEEFPDFKRWIGILNA</sequence>
<keyword id="KW-0027">Amidation</keyword>
<keyword id="KW-0903">Direct protein sequencing</keyword>
<keyword id="KW-1015">Disulfide bond</keyword>
<keyword id="KW-0372">Hormone</keyword>
<keyword id="KW-0527">Neuropeptide</keyword>
<keyword id="KW-0964">Secreted</keyword>
<organism>
    <name type="scientific">Procambarus clarkii</name>
    <name type="common">Red swamp crayfish</name>
    <dbReference type="NCBI Taxonomy" id="6728"/>
    <lineage>
        <taxon>Eukaryota</taxon>
        <taxon>Metazoa</taxon>
        <taxon>Ecdysozoa</taxon>
        <taxon>Arthropoda</taxon>
        <taxon>Crustacea</taxon>
        <taxon>Multicrustacea</taxon>
        <taxon>Malacostraca</taxon>
        <taxon>Eumalacostraca</taxon>
        <taxon>Eucarida</taxon>
        <taxon>Decapoda</taxon>
        <taxon>Pleocyemata</taxon>
        <taxon>Astacidea</taxon>
        <taxon>Astacoidea</taxon>
        <taxon>Cambaridae</taxon>
        <taxon>Procambarus</taxon>
    </lineage>
</organism>
<feature type="chain" id="PRO_0000209865" description="Molt-inhibiting hormone">
    <location>
        <begin position="1"/>
        <end position="75"/>
    </location>
</feature>
<feature type="modified residue" description="Alanine amide" evidence="2">
    <location>
        <position position="75"/>
    </location>
</feature>
<feature type="disulfide bond" evidence="1">
    <location>
        <begin position="7"/>
        <end position="44"/>
    </location>
</feature>
<feature type="disulfide bond" evidence="1">
    <location>
        <begin position="24"/>
        <end position="40"/>
    </location>
</feature>
<feature type="disulfide bond" evidence="1">
    <location>
        <begin position="27"/>
        <end position="53"/>
    </location>
</feature>
<evidence type="ECO:0000250" key="1"/>
<evidence type="ECO:0000269" key="2">
    <source>
    </source>
</evidence>
<evidence type="ECO:0000305" key="3"/>
<protein>
    <recommendedName>
        <fullName>Molt-inhibiting hormone</fullName>
        <shortName>MIH</shortName>
    </recommendedName>
</protein>
<proteinExistence type="evidence at protein level"/>
<accession>P55848</accession>